<comment type="function">
    <text evidence="1">DNA primase is the polymerase that synthesizes small RNA primers for the Okazaki fragments made during discontinuous DNA replication.</text>
</comment>
<comment type="cofactor">
    <cofactor evidence="1">
        <name>[4Fe-4S] cluster</name>
        <dbReference type="ChEBI" id="CHEBI:49883"/>
    </cofactor>
    <text evidence="1">Binds 1 [4Fe-4S] cluster.</text>
</comment>
<comment type="subunit">
    <text evidence="1">Heterodimer of a small subunit and a large subunit.</text>
</comment>
<comment type="alternative products">
    <event type="alternative splicing"/>
    <isoform>
        <id>Q84WJ2-1</id>
        <name>1</name>
        <sequence type="displayed"/>
    </isoform>
    <text>A number of isoforms are produced. According to EST sequences.</text>
</comment>
<comment type="similarity">
    <text evidence="2">Belongs to the eukaryotic-type primase large subunit family.</text>
</comment>
<comment type="sequence caution" evidence="2">
    <conflict type="erroneous gene model prediction">
        <sequence resource="EMBL-CDS" id="AAG00249"/>
    </conflict>
</comment>
<gene>
    <name type="ordered locus">At1g67320</name>
    <name type="ORF">F1N21_14</name>
</gene>
<reference key="1">
    <citation type="journal article" date="2000" name="Nature">
        <title>Sequence and analysis of chromosome 1 of the plant Arabidopsis thaliana.</title>
        <authorList>
            <person name="Theologis A."/>
            <person name="Ecker J.R."/>
            <person name="Palm C.J."/>
            <person name="Federspiel N.A."/>
            <person name="Kaul S."/>
            <person name="White O."/>
            <person name="Alonso J."/>
            <person name="Altafi H."/>
            <person name="Araujo R."/>
            <person name="Bowman C.L."/>
            <person name="Brooks S.Y."/>
            <person name="Buehler E."/>
            <person name="Chan A."/>
            <person name="Chao Q."/>
            <person name="Chen H."/>
            <person name="Cheuk R.F."/>
            <person name="Chin C.W."/>
            <person name="Chung M.K."/>
            <person name="Conn L."/>
            <person name="Conway A.B."/>
            <person name="Conway A.R."/>
            <person name="Creasy T.H."/>
            <person name="Dewar K."/>
            <person name="Dunn P."/>
            <person name="Etgu P."/>
            <person name="Feldblyum T.V."/>
            <person name="Feng J.-D."/>
            <person name="Fong B."/>
            <person name="Fujii C.Y."/>
            <person name="Gill J.E."/>
            <person name="Goldsmith A.D."/>
            <person name="Haas B."/>
            <person name="Hansen N.F."/>
            <person name="Hughes B."/>
            <person name="Huizar L."/>
            <person name="Hunter J.L."/>
            <person name="Jenkins J."/>
            <person name="Johnson-Hopson C."/>
            <person name="Khan S."/>
            <person name="Khaykin E."/>
            <person name="Kim C.J."/>
            <person name="Koo H.L."/>
            <person name="Kremenetskaia I."/>
            <person name="Kurtz D.B."/>
            <person name="Kwan A."/>
            <person name="Lam B."/>
            <person name="Langin-Hooper S."/>
            <person name="Lee A."/>
            <person name="Lee J.M."/>
            <person name="Lenz C.A."/>
            <person name="Li J.H."/>
            <person name="Li Y.-P."/>
            <person name="Lin X."/>
            <person name="Liu S.X."/>
            <person name="Liu Z.A."/>
            <person name="Luros J.S."/>
            <person name="Maiti R."/>
            <person name="Marziali A."/>
            <person name="Militscher J."/>
            <person name="Miranda M."/>
            <person name="Nguyen M."/>
            <person name="Nierman W.C."/>
            <person name="Osborne B.I."/>
            <person name="Pai G."/>
            <person name="Peterson J."/>
            <person name="Pham P.K."/>
            <person name="Rizzo M."/>
            <person name="Rooney T."/>
            <person name="Rowley D."/>
            <person name="Sakano H."/>
            <person name="Salzberg S.L."/>
            <person name="Schwartz J.R."/>
            <person name="Shinn P."/>
            <person name="Southwick A.M."/>
            <person name="Sun H."/>
            <person name="Tallon L.J."/>
            <person name="Tambunga G."/>
            <person name="Toriumi M.J."/>
            <person name="Town C.D."/>
            <person name="Utterback T."/>
            <person name="Van Aken S."/>
            <person name="Vaysberg M."/>
            <person name="Vysotskaia V.S."/>
            <person name="Walker M."/>
            <person name="Wu D."/>
            <person name="Yu G."/>
            <person name="Fraser C.M."/>
            <person name="Venter J.C."/>
            <person name="Davis R.W."/>
        </authorList>
    </citation>
    <scope>NUCLEOTIDE SEQUENCE [LARGE SCALE GENOMIC DNA]</scope>
    <source>
        <strain>cv. Columbia</strain>
    </source>
</reference>
<reference key="2">
    <citation type="journal article" date="2017" name="Plant J.">
        <title>Araport11: a complete reannotation of the Arabidopsis thaliana reference genome.</title>
        <authorList>
            <person name="Cheng C.Y."/>
            <person name="Krishnakumar V."/>
            <person name="Chan A.P."/>
            <person name="Thibaud-Nissen F."/>
            <person name="Schobel S."/>
            <person name="Town C.D."/>
        </authorList>
    </citation>
    <scope>GENOME REANNOTATION</scope>
    <source>
        <strain>cv. Columbia</strain>
    </source>
</reference>
<reference key="3">
    <citation type="journal article" date="2003" name="Science">
        <title>Empirical analysis of transcriptional activity in the Arabidopsis genome.</title>
        <authorList>
            <person name="Yamada K."/>
            <person name="Lim J."/>
            <person name="Dale J.M."/>
            <person name="Chen H."/>
            <person name="Shinn P."/>
            <person name="Palm C.J."/>
            <person name="Southwick A.M."/>
            <person name="Wu H.C."/>
            <person name="Kim C.J."/>
            <person name="Nguyen M."/>
            <person name="Pham P.K."/>
            <person name="Cheuk R.F."/>
            <person name="Karlin-Newmann G."/>
            <person name="Liu S.X."/>
            <person name="Lam B."/>
            <person name="Sakano H."/>
            <person name="Wu T."/>
            <person name="Yu G."/>
            <person name="Miranda M."/>
            <person name="Quach H.L."/>
            <person name="Tripp M."/>
            <person name="Chang C.H."/>
            <person name="Lee J.M."/>
            <person name="Toriumi M.J."/>
            <person name="Chan M.M."/>
            <person name="Tang C.C."/>
            <person name="Onodera C.S."/>
            <person name="Deng J.M."/>
            <person name="Akiyama K."/>
            <person name="Ansari Y."/>
            <person name="Arakawa T."/>
            <person name="Banh J."/>
            <person name="Banno F."/>
            <person name="Bowser L."/>
            <person name="Brooks S.Y."/>
            <person name="Carninci P."/>
            <person name="Chao Q."/>
            <person name="Choy N."/>
            <person name="Enju A."/>
            <person name="Goldsmith A.D."/>
            <person name="Gurjal M."/>
            <person name="Hansen N.F."/>
            <person name="Hayashizaki Y."/>
            <person name="Johnson-Hopson C."/>
            <person name="Hsuan V.W."/>
            <person name="Iida K."/>
            <person name="Karnes M."/>
            <person name="Khan S."/>
            <person name="Koesema E."/>
            <person name="Ishida J."/>
            <person name="Jiang P.X."/>
            <person name="Jones T."/>
            <person name="Kawai J."/>
            <person name="Kamiya A."/>
            <person name="Meyers C."/>
            <person name="Nakajima M."/>
            <person name="Narusaka M."/>
            <person name="Seki M."/>
            <person name="Sakurai T."/>
            <person name="Satou M."/>
            <person name="Tamse R."/>
            <person name="Vaysberg M."/>
            <person name="Wallender E.K."/>
            <person name="Wong C."/>
            <person name="Yamamura Y."/>
            <person name="Yuan S."/>
            <person name="Shinozaki K."/>
            <person name="Davis R.W."/>
            <person name="Theologis A."/>
            <person name="Ecker J.R."/>
        </authorList>
    </citation>
    <scope>NUCLEOTIDE SEQUENCE [LARGE SCALE MRNA]</scope>
    <source>
        <strain>cv. Columbia</strain>
    </source>
</reference>
<reference key="4">
    <citation type="submission" date="2006-07" db="EMBL/GenBank/DDBJ databases">
        <title>Large-scale analysis of RIKEN Arabidopsis full-length (RAFL) cDNAs.</title>
        <authorList>
            <person name="Totoki Y."/>
            <person name="Seki M."/>
            <person name="Ishida J."/>
            <person name="Nakajima M."/>
            <person name="Enju A."/>
            <person name="Kamiya A."/>
            <person name="Narusaka M."/>
            <person name="Shin-i T."/>
            <person name="Nakagawa M."/>
            <person name="Sakamoto N."/>
            <person name="Oishi K."/>
            <person name="Kohara Y."/>
            <person name="Kobayashi M."/>
            <person name="Toyoda A."/>
            <person name="Sakaki Y."/>
            <person name="Sakurai T."/>
            <person name="Iida K."/>
            <person name="Akiyama K."/>
            <person name="Satou M."/>
            <person name="Toyoda T."/>
            <person name="Konagaya A."/>
            <person name="Carninci P."/>
            <person name="Kawai J."/>
            <person name="Hayashizaki Y."/>
            <person name="Shinozaki K."/>
        </authorList>
    </citation>
    <scope>NUCLEOTIDE SEQUENCE [LARGE SCALE MRNA]</scope>
    <source>
        <strain>cv. Columbia</strain>
    </source>
</reference>
<reference key="5">
    <citation type="submission" date="2002-03" db="EMBL/GenBank/DDBJ databases">
        <title>Full-length cDNA from Arabidopsis thaliana.</title>
        <authorList>
            <person name="Brover V.V."/>
            <person name="Troukhan M.E."/>
            <person name="Alexandrov N.A."/>
            <person name="Lu Y.-P."/>
            <person name="Flavell R.B."/>
            <person name="Feldmann K.A."/>
        </authorList>
    </citation>
    <scope>NUCLEOTIDE SEQUENCE [LARGE SCALE MRNA]</scope>
</reference>
<keyword id="KW-0004">4Fe-4S</keyword>
<keyword id="KW-0025">Alternative splicing</keyword>
<keyword id="KW-0235">DNA replication</keyword>
<keyword id="KW-0238">DNA-binding</keyword>
<keyword id="KW-0408">Iron</keyword>
<keyword id="KW-0411">Iron-sulfur</keyword>
<keyword id="KW-0479">Metal-binding</keyword>
<keyword id="KW-0639">Primosome</keyword>
<keyword id="KW-1185">Reference proteome</keyword>
<name>PRI2_ARATH</name>
<proteinExistence type="evidence at transcript level"/>
<feature type="chain" id="PRO_0000046773" description="Probable DNA primase large subunit">
    <location>
        <begin position="1"/>
        <end position="454"/>
    </location>
</feature>
<feature type="binding site" evidence="1">
    <location>
        <position position="280"/>
    </location>
    <ligand>
        <name>[4Fe-4S] cluster</name>
        <dbReference type="ChEBI" id="CHEBI:49883"/>
    </ligand>
</feature>
<feature type="binding site" evidence="1">
    <location>
        <position position="359"/>
    </location>
    <ligand>
        <name>[4Fe-4S] cluster</name>
        <dbReference type="ChEBI" id="CHEBI:49883"/>
    </ligand>
</feature>
<feature type="binding site" evidence="1">
    <location>
        <position position="375"/>
    </location>
    <ligand>
        <name>[4Fe-4S] cluster</name>
        <dbReference type="ChEBI" id="CHEBI:49883"/>
    </ligand>
</feature>
<feature type="binding site" evidence="1">
    <location>
        <position position="415"/>
    </location>
    <ligand>
        <name>[4Fe-4S] cluster</name>
        <dbReference type="ChEBI" id="CHEBI:49883"/>
    </ligand>
</feature>
<feature type="sequence conflict" description="In Ref. 3; AAO24587 and 4; BAF00108." evidence="2" ref="3 4">
    <original>T</original>
    <variation>A</variation>
    <location>
        <position position="18"/>
    </location>
</feature>
<evidence type="ECO:0000250" key="1"/>
<evidence type="ECO:0000305" key="2"/>
<accession>Q84WJ2</accession>
<accession>Q0WRZ1</accession>
<accession>Q8LFN6</accession>
<accession>Q9FYG1</accession>
<protein>
    <recommendedName>
        <fullName>Probable DNA primase large subunit</fullName>
    </recommendedName>
</protein>
<dbReference type="EMBL" id="AC002130">
    <property type="protein sequence ID" value="AAG00249.1"/>
    <property type="status" value="ALT_SEQ"/>
    <property type="molecule type" value="Genomic_DNA"/>
</dbReference>
<dbReference type="EMBL" id="CP002684">
    <property type="protein sequence ID" value="AEE34629.1"/>
    <property type="molecule type" value="Genomic_DNA"/>
</dbReference>
<dbReference type="EMBL" id="BT003155">
    <property type="protein sequence ID" value="AAO24587.1"/>
    <property type="molecule type" value="mRNA"/>
</dbReference>
<dbReference type="EMBL" id="AK228152">
    <property type="protein sequence ID" value="BAF00108.1"/>
    <property type="molecule type" value="mRNA"/>
</dbReference>
<dbReference type="EMBL" id="AY084736">
    <property type="protein sequence ID" value="AAM61309.1"/>
    <property type="molecule type" value="mRNA"/>
</dbReference>
<dbReference type="PIR" id="G96696">
    <property type="entry name" value="G96696"/>
</dbReference>
<dbReference type="RefSeq" id="NP_001185340.1">
    <molecule id="Q84WJ2-1"/>
    <property type="nucleotide sequence ID" value="NM_001198411.2"/>
</dbReference>
<dbReference type="SMR" id="Q84WJ2"/>
<dbReference type="BioGRID" id="28273">
    <property type="interactions" value="2"/>
</dbReference>
<dbReference type="FunCoup" id="Q84WJ2">
    <property type="interactions" value="3768"/>
</dbReference>
<dbReference type="STRING" id="3702.Q84WJ2"/>
<dbReference type="PaxDb" id="3702-AT1G67320.3"/>
<dbReference type="DNASU" id="843052"/>
<dbReference type="EnsemblPlants" id="AT1G67320.2">
    <molecule id="Q84WJ2-1"/>
    <property type="protein sequence ID" value="AT1G67320.2"/>
    <property type="gene ID" value="AT1G67320"/>
</dbReference>
<dbReference type="Gramene" id="AT1G67320.2">
    <molecule id="Q84WJ2-1"/>
    <property type="protein sequence ID" value="AT1G67320.2"/>
    <property type="gene ID" value="AT1G67320"/>
</dbReference>
<dbReference type="KEGG" id="ath:AT1G67320"/>
<dbReference type="Araport" id="AT1G67320"/>
<dbReference type="TAIR" id="AT1G67320">
    <property type="gene designation" value="EMB2813"/>
</dbReference>
<dbReference type="eggNOG" id="KOG2267">
    <property type="taxonomic scope" value="Eukaryota"/>
</dbReference>
<dbReference type="HOGENOM" id="CLU_026253_2_1_1"/>
<dbReference type="InParanoid" id="Q84WJ2"/>
<dbReference type="OMA" id="RINYKPW"/>
<dbReference type="PhylomeDB" id="Q84WJ2"/>
<dbReference type="PRO" id="PR:Q84WJ2"/>
<dbReference type="Proteomes" id="UP000006548">
    <property type="component" value="Chromosome 1"/>
</dbReference>
<dbReference type="ExpressionAtlas" id="Q84WJ2">
    <property type="expression patterns" value="baseline and differential"/>
</dbReference>
<dbReference type="GO" id="GO:0005658">
    <property type="term" value="C:alpha DNA polymerase:primase complex"/>
    <property type="evidence" value="ECO:0007669"/>
    <property type="project" value="UniProtKB-ARBA"/>
</dbReference>
<dbReference type="GO" id="GO:0051539">
    <property type="term" value="F:4 iron, 4 sulfur cluster binding"/>
    <property type="evidence" value="ECO:0007669"/>
    <property type="project" value="UniProtKB-KW"/>
</dbReference>
<dbReference type="GO" id="GO:0003677">
    <property type="term" value="F:DNA binding"/>
    <property type="evidence" value="ECO:0007669"/>
    <property type="project" value="UniProtKB-KW"/>
</dbReference>
<dbReference type="GO" id="GO:0046872">
    <property type="term" value="F:metal ion binding"/>
    <property type="evidence" value="ECO:0007669"/>
    <property type="project" value="UniProtKB-KW"/>
</dbReference>
<dbReference type="GO" id="GO:0006269">
    <property type="term" value="P:DNA replication, synthesis of primer"/>
    <property type="evidence" value="ECO:0007669"/>
    <property type="project" value="UniProtKB-KW"/>
</dbReference>
<dbReference type="CDD" id="cd07322">
    <property type="entry name" value="PriL_PriS_Eukaryotic"/>
    <property type="match status" value="1"/>
</dbReference>
<dbReference type="FunFam" id="1.20.930.80:FF:000002">
    <property type="entry name" value="DNA primase large subunit"/>
    <property type="match status" value="1"/>
</dbReference>
<dbReference type="Gene3D" id="1.20.930.80">
    <property type="match status" value="1"/>
</dbReference>
<dbReference type="InterPro" id="IPR016558">
    <property type="entry name" value="DNA_primase_lsu_euk"/>
</dbReference>
<dbReference type="InterPro" id="IPR007238">
    <property type="entry name" value="DNA_primase_lsu_euk/arc"/>
</dbReference>
<dbReference type="PANTHER" id="PTHR10537">
    <property type="entry name" value="DNA PRIMASE LARGE SUBUNIT"/>
    <property type="match status" value="1"/>
</dbReference>
<dbReference type="PANTHER" id="PTHR10537:SF3">
    <property type="entry name" value="DNA PRIMASE LARGE SUBUNIT"/>
    <property type="match status" value="1"/>
</dbReference>
<dbReference type="Pfam" id="PF04104">
    <property type="entry name" value="DNA_primase_lrg"/>
    <property type="match status" value="1"/>
</dbReference>
<dbReference type="PIRSF" id="PIRSF009449">
    <property type="entry name" value="DNA_primase_large_subunit"/>
    <property type="match status" value="1"/>
</dbReference>
<sequence>MEVIRSQKRTVSNDVVSTPTLPLYLTAPHMEVRLEEFELFAIDRLRVLKGVSDGLARARNPNEMDDLVETLWKEHMRLSNVSEMINKDIISHFVLRLVYCRSDELKKWFLSMETALFRHRFRLKKIEEQRAIVGEFGLPYKAVIGAELESLKERLGLVARSHGQISSDVENIYYKVPFEEVPDLVASRRVLLQKGFAFVAGTQLVSLVVTQFRSHLSKALILTNRKWTTTIREREKDRLTPIVEALSTSYLGPDYSQSNEYADISLKDIDQVSKSSFPLCMRHLFEKLREDHHLKHGGRMQLGLFLKGVGLKLDDALAFWREEFTKKVGSERFDKEYAYAIRHNYGKEGKRTDYTPYACSKIITSAPGAGDHHGCPYRHFSEDNLKAALSRMGLSSRGMEDVMDKVRNRHYQLACTLTFEAVYGTSCDTGINHPNQYFEESQKILKSKTPAAPV</sequence>
<organism>
    <name type="scientific">Arabidopsis thaliana</name>
    <name type="common">Mouse-ear cress</name>
    <dbReference type="NCBI Taxonomy" id="3702"/>
    <lineage>
        <taxon>Eukaryota</taxon>
        <taxon>Viridiplantae</taxon>
        <taxon>Streptophyta</taxon>
        <taxon>Embryophyta</taxon>
        <taxon>Tracheophyta</taxon>
        <taxon>Spermatophyta</taxon>
        <taxon>Magnoliopsida</taxon>
        <taxon>eudicotyledons</taxon>
        <taxon>Gunneridae</taxon>
        <taxon>Pentapetalae</taxon>
        <taxon>rosids</taxon>
        <taxon>malvids</taxon>
        <taxon>Brassicales</taxon>
        <taxon>Brassicaceae</taxon>
        <taxon>Camelineae</taxon>
        <taxon>Arabidopsis</taxon>
    </lineage>
</organism>